<gene>
    <name evidence="1" type="primary">gpsA</name>
    <name type="ordered locus">APH_0198</name>
</gene>
<reference key="1">
    <citation type="journal article" date="2006" name="PLoS Genet.">
        <title>Comparative genomics of emerging human ehrlichiosis agents.</title>
        <authorList>
            <person name="Dunning Hotopp J.C."/>
            <person name="Lin M."/>
            <person name="Madupu R."/>
            <person name="Crabtree J."/>
            <person name="Angiuoli S.V."/>
            <person name="Eisen J.A."/>
            <person name="Seshadri R."/>
            <person name="Ren Q."/>
            <person name="Wu M."/>
            <person name="Utterback T.R."/>
            <person name="Smith S."/>
            <person name="Lewis M."/>
            <person name="Khouri H."/>
            <person name="Zhang C."/>
            <person name="Niu H."/>
            <person name="Lin Q."/>
            <person name="Ohashi N."/>
            <person name="Zhi N."/>
            <person name="Nelson W.C."/>
            <person name="Brinkac L.M."/>
            <person name="Dodson R.J."/>
            <person name="Rosovitz M.J."/>
            <person name="Sundaram J.P."/>
            <person name="Daugherty S.C."/>
            <person name="Davidsen T."/>
            <person name="Durkin A.S."/>
            <person name="Gwinn M.L."/>
            <person name="Haft D.H."/>
            <person name="Selengut J.D."/>
            <person name="Sullivan S.A."/>
            <person name="Zafar N."/>
            <person name="Zhou L."/>
            <person name="Benahmed F."/>
            <person name="Forberger H."/>
            <person name="Halpin R."/>
            <person name="Mulligan S."/>
            <person name="Robinson J."/>
            <person name="White O."/>
            <person name="Rikihisa Y."/>
            <person name="Tettelin H."/>
        </authorList>
    </citation>
    <scope>NUCLEOTIDE SEQUENCE [LARGE SCALE GENOMIC DNA]</scope>
    <source>
        <strain>HZ</strain>
    </source>
</reference>
<evidence type="ECO:0000255" key="1">
    <source>
        <dbReference type="HAMAP-Rule" id="MF_00394"/>
    </source>
</evidence>
<proteinExistence type="inferred from homology"/>
<organism>
    <name type="scientific">Anaplasma phagocytophilum (strain HZ)</name>
    <dbReference type="NCBI Taxonomy" id="212042"/>
    <lineage>
        <taxon>Bacteria</taxon>
        <taxon>Pseudomonadati</taxon>
        <taxon>Pseudomonadota</taxon>
        <taxon>Alphaproteobacteria</taxon>
        <taxon>Rickettsiales</taxon>
        <taxon>Anaplasmataceae</taxon>
        <taxon>Anaplasma</taxon>
        <taxon>phagocytophilum group</taxon>
    </lineage>
</organism>
<dbReference type="EC" id="1.1.1.94" evidence="1"/>
<dbReference type="EMBL" id="CP000235">
    <property type="protein sequence ID" value="ABD43274.1"/>
    <property type="molecule type" value="Genomic_DNA"/>
</dbReference>
<dbReference type="RefSeq" id="WP_011450345.1">
    <property type="nucleotide sequence ID" value="NC_007797.1"/>
</dbReference>
<dbReference type="SMR" id="Q2GLD0"/>
<dbReference type="STRING" id="212042.APH_0198"/>
<dbReference type="PaxDb" id="212042-APH_0198"/>
<dbReference type="EnsemblBacteria" id="ABD43274">
    <property type="protein sequence ID" value="ABD43274"/>
    <property type="gene ID" value="APH_0198"/>
</dbReference>
<dbReference type="KEGG" id="aph:APH_0198"/>
<dbReference type="eggNOG" id="COG0240">
    <property type="taxonomic scope" value="Bacteria"/>
</dbReference>
<dbReference type="HOGENOM" id="CLU_033449_0_0_5"/>
<dbReference type="UniPathway" id="UPA00940"/>
<dbReference type="Proteomes" id="UP000001943">
    <property type="component" value="Chromosome"/>
</dbReference>
<dbReference type="GO" id="GO:0005829">
    <property type="term" value="C:cytosol"/>
    <property type="evidence" value="ECO:0007669"/>
    <property type="project" value="TreeGrafter"/>
</dbReference>
<dbReference type="GO" id="GO:0047952">
    <property type="term" value="F:glycerol-3-phosphate dehydrogenase [NAD(P)+] activity"/>
    <property type="evidence" value="ECO:0007669"/>
    <property type="project" value="UniProtKB-UniRule"/>
</dbReference>
<dbReference type="GO" id="GO:0051287">
    <property type="term" value="F:NAD binding"/>
    <property type="evidence" value="ECO:0007669"/>
    <property type="project" value="InterPro"/>
</dbReference>
<dbReference type="GO" id="GO:0005975">
    <property type="term" value="P:carbohydrate metabolic process"/>
    <property type="evidence" value="ECO:0007669"/>
    <property type="project" value="InterPro"/>
</dbReference>
<dbReference type="GO" id="GO:0046167">
    <property type="term" value="P:glycerol-3-phosphate biosynthetic process"/>
    <property type="evidence" value="ECO:0007669"/>
    <property type="project" value="UniProtKB-UniRule"/>
</dbReference>
<dbReference type="GO" id="GO:0046168">
    <property type="term" value="P:glycerol-3-phosphate catabolic process"/>
    <property type="evidence" value="ECO:0007669"/>
    <property type="project" value="InterPro"/>
</dbReference>
<dbReference type="GO" id="GO:0006650">
    <property type="term" value="P:glycerophospholipid metabolic process"/>
    <property type="evidence" value="ECO:0007669"/>
    <property type="project" value="UniProtKB-UniRule"/>
</dbReference>
<dbReference type="GO" id="GO:0008654">
    <property type="term" value="P:phospholipid biosynthetic process"/>
    <property type="evidence" value="ECO:0007669"/>
    <property type="project" value="UniProtKB-KW"/>
</dbReference>
<dbReference type="FunFam" id="3.40.50.720:FF:000019">
    <property type="entry name" value="Glycerol-3-phosphate dehydrogenase [NAD(P)+]"/>
    <property type="match status" value="1"/>
</dbReference>
<dbReference type="Gene3D" id="1.10.1040.10">
    <property type="entry name" value="N-(1-d-carboxylethyl)-l-norvaline Dehydrogenase, domain 2"/>
    <property type="match status" value="1"/>
</dbReference>
<dbReference type="Gene3D" id="3.40.50.720">
    <property type="entry name" value="NAD(P)-binding Rossmann-like Domain"/>
    <property type="match status" value="1"/>
</dbReference>
<dbReference type="HAMAP" id="MF_00394">
    <property type="entry name" value="NAD_Glyc3P_dehydrog"/>
    <property type="match status" value="1"/>
</dbReference>
<dbReference type="InterPro" id="IPR008927">
    <property type="entry name" value="6-PGluconate_DH-like_C_sf"/>
</dbReference>
<dbReference type="InterPro" id="IPR013328">
    <property type="entry name" value="6PGD_dom2"/>
</dbReference>
<dbReference type="InterPro" id="IPR006168">
    <property type="entry name" value="G3P_DH_NAD-dep"/>
</dbReference>
<dbReference type="InterPro" id="IPR006109">
    <property type="entry name" value="G3P_DH_NAD-dep_C"/>
</dbReference>
<dbReference type="InterPro" id="IPR011128">
    <property type="entry name" value="G3P_DH_NAD-dep_N"/>
</dbReference>
<dbReference type="InterPro" id="IPR036291">
    <property type="entry name" value="NAD(P)-bd_dom_sf"/>
</dbReference>
<dbReference type="NCBIfam" id="NF000940">
    <property type="entry name" value="PRK00094.1-2"/>
    <property type="match status" value="1"/>
</dbReference>
<dbReference type="NCBIfam" id="NF000942">
    <property type="entry name" value="PRK00094.1-4"/>
    <property type="match status" value="1"/>
</dbReference>
<dbReference type="PANTHER" id="PTHR11728">
    <property type="entry name" value="GLYCEROL-3-PHOSPHATE DEHYDROGENASE"/>
    <property type="match status" value="1"/>
</dbReference>
<dbReference type="PANTHER" id="PTHR11728:SF1">
    <property type="entry name" value="GLYCEROL-3-PHOSPHATE DEHYDROGENASE [NAD(+)] 2, CHLOROPLASTIC"/>
    <property type="match status" value="1"/>
</dbReference>
<dbReference type="Pfam" id="PF07479">
    <property type="entry name" value="NAD_Gly3P_dh_C"/>
    <property type="match status" value="1"/>
</dbReference>
<dbReference type="Pfam" id="PF01210">
    <property type="entry name" value="NAD_Gly3P_dh_N"/>
    <property type="match status" value="1"/>
</dbReference>
<dbReference type="PIRSF" id="PIRSF000114">
    <property type="entry name" value="Glycerol-3-P_dh"/>
    <property type="match status" value="1"/>
</dbReference>
<dbReference type="PRINTS" id="PR00077">
    <property type="entry name" value="GPDHDRGNASE"/>
</dbReference>
<dbReference type="SUPFAM" id="SSF48179">
    <property type="entry name" value="6-phosphogluconate dehydrogenase C-terminal domain-like"/>
    <property type="match status" value="1"/>
</dbReference>
<dbReference type="SUPFAM" id="SSF51735">
    <property type="entry name" value="NAD(P)-binding Rossmann-fold domains"/>
    <property type="match status" value="1"/>
</dbReference>
<dbReference type="PROSITE" id="PS00957">
    <property type="entry name" value="NAD_G3PDH"/>
    <property type="match status" value="1"/>
</dbReference>
<comment type="function">
    <text evidence="1">Catalyzes the reduction of the glycolytic intermediate dihydroxyacetone phosphate (DHAP) to sn-glycerol 3-phosphate (G3P), the key precursor for phospholipid synthesis.</text>
</comment>
<comment type="catalytic activity">
    <reaction evidence="1">
        <text>sn-glycerol 3-phosphate + NAD(+) = dihydroxyacetone phosphate + NADH + H(+)</text>
        <dbReference type="Rhea" id="RHEA:11092"/>
        <dbReference type="ChEBI" id="CHEBI:15378"/>
        <dbReference type="ChEBI" id="CHEBI:57540"/>
        <dbReference type="ChEBI" id="CHEBI:57597"/>
        <dbReference type="ChEBI" id="CHEBI:57642"/>
        <dbReference type="ChEBI" id="CHEBI:57945"/>
        <dbReference type="EC" id="1.1.1.94"/>
    </reaction>
    <physiologicalReaction direction="right-to-left" evidence="1">
        <dbReference type="Rhea" id="RHEA:11094"/>
    </physiologicalReaction>
</comment>
<comment type="catalytic activity">
    <reaction evidence="1">
        <text>sn-glycerol 3-phosphate + NADP(+) = dihydroxyacetone phosphate + NADPH + H(+)</text>
        <dbReference type="Rhea" id="RHEA:11096"/>
        <dbReference type="ChEBI" id="CHEBI:15378"/>
        <dbReference type="ChEBI" id="CHEBI:57597"/>
        <dbReference type="ChEBI" id="CHEBI:57642"/>
        <dbReference type="ChEBI" id="CHEBI:57783"/>
        <dbReference type="ChEBI" id="CHEBI:58349"/>
        <dbReference type="EC" id="1.1.1.94"/>
    </reaction>
    <physiologicalReaction direction="right-to-left" evidence="1">
        <dbReference type="Rhea" id="RHEA:11098"/>
    </physiologicalReaction>
</comment>
<comment type="pathway">
    <text evidence="1">Membrane lipid metabolism; glycerophospholipid metabolism.</text>
</comment>
<comment type="subcellular location">
    <subcellularLocation>
        <location evidence="1">Cytoplasm</location>
    </subcellularLocation>
</comment>
<comment type="similarity">
    <text evidence="1">Belongs to the NAD-dependent glycerol-3-phosphate dehydrogenase family.</text>
</comment>
<accession>Q2GLD0</accession>
<feature type="chain" id="PRO_0000255279" description="Glycerol-3-phosphate dehydrogenase [NAD(P)+]">
    <location>
        <begin position="1"/>
        <end position="324"/>
    </location>
</feature>
<feature type="active site" description="Proton acceptor" evidence="1">
    <location>
        <position position="190"/>
    </location>
</feature>
<feature type="binding site" evidence="1">
    <location>
        <position position="11"/>
    </location>
    <ligand>
        <name>NADPH</name>
        <dbReference type="ChEBI" id="CHEBI:57783"/>
    </ligand>
</feature>
<feature type="binding site" evidence="1">
    <location>
        <position position="31"/>
    </location>
    <ligand>
        <name>NADPH</name>
        <dbReference type="ChEBI" id="CHEBI:57783"/>
    </ligand>
</feature>
<feature type="binding site" evidence="1">
    <location>
        <position position="107"/>
    </location>
    <ligand>
        <name>NADPH</name>
        <dbReference type="ChEBI" id="CHEBI:57783"/>
    </ligand>
</feature>
<feature type="binding site" evidence="1">
    <location>
        <position position="107"/>
    </location>
    <ligand>
        <name>sn-glycerol 3-phosphate</name>
        <dbReference type="ChEBI" id="CHEBI:57597"/>
    </ligand>
</feature>
<feature type="binding site" evidence="1">
    <location>
        <position position="135"/>
    </location>
    <ligand>
        <name>sn-glycerol 3-phosphate</name>
        <dbReference type="ChEBI" id="CHEBI:57597"/>
    </ligand>
</feature>
<feature type="binding site" evidence="1">
    <location>
        <position position="139"/>
    </location>
    <ligand>
        <name>NADPH</name>
        <dbReference type="ChEBI" id="CHEBI:57783"/>
    </ligand>
</feature>
<feature type="binding site" evidence="1">
    <location>
        <position position="190"/>
    </location>
    <ligand>
        <name>sn-glycerol 3-phosphate</name>
        <dbReference type="ChEBI" id="CHEBI:57597"/>
    </ligand>
</feature>
<feature type="binding site" evidence="1">
    <location>
        <position position="245"/>
    </location>
    <ligand>
        <name>sn-glycerol 3-phosphate</name>
        <dbReference type="ChEBI" id="CHEBI:57597"/>
    </ligand>
</feature>
<feature type="binding site" evidence="1">
    <location>
        <position position="255"/>
    </location>
    <ligand>
        <name>sn-glycerol 3-phosphate</name>
        <dbReference type="ChEBI" id="CHEBI:57597"/>
    </ligand>
</feature>
<feature type="binding site" evidence="1">
    <location>
        <position position="256"/>
    </location>
    <ligand>
        <name>NADPH</name>
        <dbReference type="ChEBI" id="CHEBI:57783"/>
    </ligand>
</feature>
<feature type="binding site" evidence="1">
    <location>
        <position position="256"/>
    </location>
    <ligand>
        <name>sn-glycerol 3-phosphate</name>
        <dbReference type="ChEBI" id="CHEBI:57597"/>
    </ligand>
</feature>
<feature type="binding site" evidence="1">
    <location>
        <position position="257"/>
    </location>
    <ligand>
        <name>sn-glycerol 3-phosphate</name>
        <dbReference type="ChEBI" id="CHEBI:57597"/>
    </ligand>
</feature>
<feature type="binding site" evidence="1">
    <location>
        <position position="278"/>
    </location>
    <ligand>
        <name>NADPH</name>
        <dbReference type="ChEBI" id="CHEBI:57783"/>
    </ligand>
</feature>
<feature type="binding site" evidence="1">
    <location>
        <position position="279"/>
    </location>
    <ligand>
        <name>NADPH</name>
        <dbReference type="ChEBI" id="CHEBI:57783"/>
    </ligand>
</feature>
<name>GPDA_ANAPZ</name>
<protein>
    <recommendedName>
        <fullName evidence="1">Glycerol-3-phosphate dehydrogenase [NAD(P)+]</fullName>
        <ecNumber evidence="1">1.1.1.94</ecNumber>
    </recommendedName>
    <alternativeName>
        <fullName evidence="1">NAD(P)(+)-dependent glycerol-3-phosphate dehydrogenase</fullName>
    </alternativeName>
    <alternativeName>
        <fullName evidence="1">NAD(P)H-dependent dihydroxyacetone-phosphate reductase</fullName>
    </alternativeName>
</protein>
<keyword id="KW-0963">Cytoplasm</keyword>
<keyword id="KW-0444">Lipid biosynthesis</keyword>
<keyword id="KW-0443">Lipid metabolism</keyword>
<keyword id="KW-0520">NAD</keyword>
<keyword id="KW-0521">NADP</keyword>
<keyword id="KW-0547">Nucleotide-binding</keyword>
<keyword id="KW-0560">Oxidoreductase</keyword>
<keyword id="KW-0594">Phospholipid biosynthesis</keyword>
<keyword id="KW-1208">Phospholipid metabolism</keyword>
<sequence length="324" mass="33792">MRVTVLGAGAFGTALSVALYNSCCSVALWSRNKRVLEELRNTGMNSLYLPGCLVPKEIELIPDVESALKCASVLLLCVPTQELRNLCNDVRNTAALDASVPVLVCSKGIENKSLKFAGEVIEELLPDNPVFVLSGPALAKEMVRGLPCAMVLAGRDESLAASLAEKLSSAVMSIAPSTDYVGVQIGSVLKNIIAIACGIVIGKGLGYNASAMVVVRGIAEIQAVSTAKSESVDLSTIIGLACLGDLVLTCTSASSRNMSFGLAIGKGQDIASRNDSLVEGAESAQSIDRLSNTLGIHLPVCSAIAKLLRGELDTDQVINQLLFA</sequence>